<comment type="function">
    <text evidence="3 4">Plays a role in mitochondrial biogenesis and protein folding.</text>
</comment>
<comment type="subcellular location">
    <subcellularLocation>
        <location>Mitochondrion</location>
    </subcellularLocation>
</comment>
<comment type="miscellaneous">
    <text evidence="2">Present with 7570 molecules/cell in log phase SD medium.</text>
</comment>
<organism>
    <name type="scientific">Saccharomyces cerevisiae (strain ATCC 204508 / S288c)</name>
    <name type="common">Baker's yeast</name>
    <dbReference type="NCBI Taxonomy" id="559292"/>
    <lineage>
        <taxon>Eukaryota</taxon>
        <taxon>Fungi</taxon>
        <taxon>Dikarya</taxon>
        <taxon>Ascomycota</taxon>
        <taxon>Saccharomycotina</taxon>
        <taxon>Saccharomycetes</taxon>
        <taxon>Saccharomycetales</taxon>
        <taxon>Saccharomycetaceae</taxon>
        <taxon>Saccharomyces</taxon>
    </lineage>
</organism>
<keyword id="KW-0143">Chaperone</keyword>
<keyword id="KW-0479">Metal-binding</keyword>
<keyword id="KW-0496">Mitochondrion</keyword>
<keyword id="KW-1185">Reference proteome</keyword>
<keyword id="KW-0677">Repeat</keyword>
<keyword id="KW-0346">Stress response</keyword>
<keyword id="KW-0809">Transit peptide</keyword>
<keyword id="KW-0862">Zinc</keyword>
<keyword id="KW-0863">Zinc-finger</keyword>
<reference key="1">
    <citation type="submission" date="1993-11" db="EMBL/GenBank/DDBJ databases">
        <authorList>
            <person name="Rowley N.K."/>
            <person name="Prip-Buus C."/>
            <person name="Westermann B."/>
            <person name="Brown C.M."/>
            <person name="Schwarz E."/>
            <person name="Barrell B.G."/>
            <person name="Neupert W."/>
        </authorList>
    </citation>
    <scope>NUCLEOTIDE SEQUENCE [GENOMIC DNA]</scope>
    <source>
        <strain>ATCC 204511 / S288c / AB972</strain>
    </source>
</reference>
<reference key="2">
    <citation type="submission" date="1994-09" db="EMBL/GenBank/DDBJ databases">
        <authorList>
            <person name="Barrell B.G."/>
            <person name="Churcher C."/>
            <person name="Rajandream M.A."/>
        </authorList>
    </citation>
    <scope>NUCLEOTIDE SEQUENCE [GENOMIC DNA]</scope>
    <source>
        <strain>ATCC 204511 / S288c / AB972</strain>
    </source>
</reference>
<reference key="3">
    <citation type="journal article" date="1995" name="Nat. Genet.">
        <title>Analysis of the nucleotide sequence of chromosome VI from Saccharomyces cerevisiae.</title>
        <authorList>
            <person name="Murakami Y."/>
            <person name="Naitou M."/>
            <person name="Hagiwara H."/>
            <person name="Shibata T."/>
            <person name="Ozawa M."/>
            <person name="Sasanuma S."/>
            <person name="Sasanuma M."/>
            <person name="Tsuchiya Y."/>
            <person name="Soeda E."/>
            <person name="Yokoyama K."/>
            <person name="Yamazaki M."/>
            <person name="Tashiro H."/>
            <person name="Eki T."/>
        </authorList>
    </citation>
    <scope>NUCLEOTIDE SEQUENCE [LARGE SCALE GENOMIC DNA]</scope>
    <source>
        <strain>ATCC 204508 / S288c</strain>
    </source>
</reference>
<reference key="4">
    <citation type="journal article" date="2014" name="G3 (Bethesda)">
        <title>The reference genome sequence of Saccharomyces cerevisiae: Then and now.</title>
        <authorList>
            <person name="Engel S.R."/>
            <person name="Dietrich F.S."/>
            <person name="Fisk D.G."/>
            <person name="Binkley G."/>
            <person name="Balakrishnan R."/>
            <person name="Costanzo M.C."/>
            <person name="Dwight S.S."/>
            <person name="Hitz B.C."/>
            <person name="Karra K."/>
            <person name="Nash R.S."/>
            <person name="Weng S."/>
            <person name="Wong E.D."/>
            <person name="Lloyd P."/>
            <person name="Skrzypek M.S."/>
            <person name="Miyasato S.R."/>
            <person name="Simison M."/>
            <person name="Cherry J.M."/>
        </authorList>
    </citation>
    <scope>GENOME REANNOTATION</scope>
    <source>
        <strain>ATCC 204508 / S288c</strain>
    </source>
</reference>
<reference key="5">
    <citation type="journal article" date="1994" name="Cell">
        <title>Mdj1p, a novel chaperone of the DnaJ family, is involved in mitochondrial biogenesis and protein folding.</title>
        <authorList>
            <person name="Rowley N."/>
            <person name="Prip-Buus C."/>
            <person name="Westermann B."/>
            <person name="Brown C."/>
            <person name="Schwarz E."/>
            <person name="Barrell B."/>
            <person name="Neupert W."/>
        </authorList>
    </citation>
    <scope>FUNCTION</scope>
</reference>
<reference key="6">
    <citation type="journal article" date="1997" name="J. Biol. Chem.">
        <title>Purification and biochemical properties of Saccharomyces cerevisiae Mdj1p, the mitochondrial DnaJ homologue.</title>
        <authorList>
            <person name="Deloche O."/>
            <person name="Liberek K."/>
            <person name="Zylicz M."/>
            <person name="Georgopoulos C."/>
        </authorList>
    </citation>
    <scope>FUNCTION</scope>
</reference>
<reference key="7">
    <citation type="journal article" date="2003" name="Nature">
        <title>Global analysis of protein expression in yeast.</title>
        <authorList>
            <person name="Ghaemmaghami S."/>
            <person name="Huh W.-K."/>
            <person name="Bower K."/>
            <person name="Howson R.W."/>
            <person name="Belle A."/>
            <person name="Dephoure N."/>
            <person name="O'Shea E.K."/>
            <person name="Weissman J.S."/>
        </authorList>
    </citation>
    <scope>LEVEL OF PROTEIN EXPRESSION [LARGE SCALE ANALYSIS]</scope>
</reference>
<name>MDJ1_YEAST</name>
<accession>P35191</accession>
<accession>D6VTL4</accession>
<sequence>MAFQQGVLSRCSGVFRHHVGHSRHINNILYRHAIAFASIAPRIPKSSFHTSAIRNNEAFKDPYDTLGLKKSATGAEIKKAYYKLAKKYHPDINKEPDAEKKFHDLQNAYEILSDETKRQQYDQFGPAAFGGGGAAGGAGGGSGSPFGSQFHDFSGFTSAGGSPFGGINFEDLFGAAFGGGGRGSGGASRSSSMFRQYRGDPIEIVHKVSFKDAVFGSKNVQLRFSALDPCSTCSGTGMKPNTHKVSCSTCHGTGTTVHIRGGFQMMSTCPTCNGEGTMKRPQDNCTKCHGEGVQVNRAKTITVDLPHGLQDGDVVRIPGQGSYPDIAVEADLKDSVKLSRGDILVRIRVDKDPNFSIKNKYDIWYDKEIPITTAALGGTVTIPTVEGQKIRIKVAPGTQYNQVISIPNMGVPKTSTIRGDMKVQYKIVVKKPQSLAEKCLWEALADVTNDDMAKKTMQPGTAAGTAINEEILKKQKQEEEKHAKKDDDNTLKRLENFITNTFRKIKGDKKN</sequence>
<protein>
    <recommendedName>
        <fullName>DnaJ homolog 1, mitochondrial</fullName>
    </recommendedName>
</protein>
<dbReference type="EMBL" id="Z28336">
    <property type="protein sequence ID" value="CAA82189.1"/>
    <property type="molecule type" value="Genomic_DNA"/>
</dbReference>
<dbReference type="EMBL" id="Z46255">
    <property type="protein sequence ID" value="CAA86351.1"/>
    <property type="molecule type" value="Genomic_DNA"/>
</dbReference>
<dbReference type="EMBL" id="D50617">
    <property type="protein sequence ID" value="BAA09222.1"/>
    <property type="molecule type" value="Genomic_DNA"/>
</dbReference>
<dbReference type="EMBL" id="BK006940">
    <property type="protein sequence ID" value="DAA12424.1"/>
    <property type="molecule type" value="Genomic_DNA"/>
</dbReference>
<dbReference type="PIR" id="S38898">
    <property type="entry name" value="S38898"/>
</dbReference>
<dbReference type="RefSeq" id="NP_116638.1">
    <property type="nucleotide sequence ID" value="NM_001179950.1"/>
</dbReference>
<dbReference type="SMR" id="P35191"/>
<dbReference type="BioGRID" id="31131">
    <property type="interactions" value="133"/>
</dbReference>
<dbReference type="DIP" id="DIP-764N"/>
<dbReference type="FunCoup" id="P35191">
    <property type="interactions" value="1180"/>
</dbReference>
<dbReference type="IntAct" id="P35191">
    <property type="interactions" value="76"/>
</dbReference>
<dbReference type="MINT" id="P35191"/>
<dbReference type="STRING" id="4932.YFL016C"/>
<dbReference type="iPTMnet" id="P35191"/>
<dbReference type="PaxDb" id="4932-YFL016C"/>
<dbReference type="PeptideAtlas" id="P35191"/>
<dbReference type="EnsemblFungi" id="YFL016C_mRNA">
    <property type="protein sequence ID" value="YFL016C"/>
    <property type="gene ID" value="YFL016C"/>
</dbReference>
<dbReference type="GeneID" id="850530"/>
<dbReference type="KEGG" id="sce:YFL016C"/>
<dbReference type="AGR" id="SGD:S000001878"/>
<dbReference type="SGD" id="S000001878">
    <property type="gene designation" value="MDJ1"/>
</dbReference>
<dbReference type="VEuPathDB" id="FungiDB:YFL016C"/>
<dbReference type="eggNOG" id="KOG0715">
    <property type="taxonomic scope" value="Eukaryota"/>
</dbReference>
<dbReference type="GeneTree" id="ENSGT00960000189185"/>
<dbReference type="HOGENOM" id="CLU_017633_0_3_1"/>
<dbReference type="InParanoid" id="P35191"/>
<dbReference type="OMA" id="MATDYYA"/>
<dbReference type="OrthoDB" id="10256793at2759"/>
<dbReference type="BioCyc" id="YEAST:G3O-30441-MONOMER"/>
<dbReference type="BioGRID-ORCS" id="850530">
    <property type="hits" value="6 hits in 10 CRISPR screens"/>
</dbReference>
<dbReference type="PRO" id="PR:P35191"/>
<dbReference type="Proteomes" id="UP000002311">
    <property type="component" value="Chromosome VI"/>
</dbReference>
<dbReference type="RNAct" id="P35191">
    <property type="molecule type" value="protein"/>
</dbReference>
<dbReference type="GO" id="GO:0005737">
    <property type="term" value="C:cytoplasm"/>
    <property type="evidence" value="ECO:0000318"/>
    <property type="project" value="GO_Central"/>
</dbReference>
<dbReference type="GO" id="GO:0005759">
    <property type="term" value="C:mitochondrial matrix"/>
    <property type="evidence" value="ECO:0000314"/>
    <property type="project" value="SGD"/>
</dbReference>
<dbReference type="GO" id="GO:0005739">
    <property type="term" value="C:mitochondrion"/>
    <property type="evidence" value="ECO:0007005"/>
    <property type="project" value="SGD"/>
</dbReference>
<dbReference type="GO" id="GO:0005524">
    <property type="term" value="F:ATP binding"/>
    <property type="evidence" value="ECO:0007669"/>
    <property type="project" value="InterPro"/>
</dbReference>
<dbReference type="GO" id="GO:0001671">
    <property type="term" value="F:ATPase activator activity"/>
    <property type="evidence" value="ECO:0000314"/>
    <property type="project" value="SGD"/>
</dbReference>
<dbReference type="GO" id="GO:0031072">
    <property type="term" value="F:heat shock protein binding"/>
    <property type="evidence" value="ECO:0007669"/>
    <property type="project" value="InterPro"/>
</dbReference>
<dbReference type="GO" id="GO:0051082">
    <property type="term" value="F:unfolded protein binding"/>
    <property type="evidence" value="ECO:0000315"/>
    <property type="project" value="SGD"/>
</dbReference>
<dbReference type="GO" id="GO:0008270">
    <property type="term" value="F:zinc ion binding"/>
    <property type="evidence" value="ECO:0007669"/>
    <property type="project" value="UniProtKB-KW"/>
</dbReference>
<dbReference type="GO" id="GO:0006458">
    <property type="term" value="P:'de novo' protein folding"/>
    <property type="evidence" value="ECO:0000315"/>
    <property type="project" value="SGD"/>
</dbReference>
<dbReference type="GO" id="GO:0051085">
    <property type="term" value="P:chaperone cofactor-dependent protein refolding"/>
    <property type="evidence" value="ECO:0000318"/>
    <property type="project" value="GO_Central"/>
</dbReference>
<dbReference type="GO" id="GO:0000002">
    <property type="term" value="P:mitochondrial genome maintenance"/>
    <property type="evidence" value="ECO:0000315"/>
    <property type="project" value="SGD"/>
</dbReference>
<dbReference type="GO" id="GO:0006515">
    <property type="term" value="P:protein quality control for misfolded or incompletely synthesized proteins"/>
    <property type="evidence" value="ECO:0000315"/>
    <property type="project" value="SGD"/>
</dbReference>
<dbReference type="GO" id="GO:0042026">
    <property type="term" value="P:protein refolding"/>
    <property type="evidence" value="ECO:0000314"/>
    <property type="project" value="SGD"/>
</dbReference>
<dbReference type="GO" id="GO:0009408">
    <property type="term" value="P:response to heat"/>
    <property type="evidence" value="ECO:0000315"/>
    <property type="project" value="SGD"/>
</dbReference>
<dbReference type="CDD" id="cd06257">
    <property type="entry name" value="DnaJ"/>
    <property type="match status" value="1"/>
</dbReference>
<dbReference type="CDD" id="cd10747">
    <property type="entry name" value="DnaJ_C"/>
    <property type="match status" value="1"/>
</dbReference>
<dbReference type="CDD" id="cd10719">
    <property type="entry name" value="DnaJ_zf"/>
    <property type="match status" value="1"/>
</dbReference>
<dbReference type="FunFam" id="2.60.260.20:FF:000005">
    <property type="entry name" value="Chaperone protein dnaJ 1, mitochondrial"/>
    <property type="match status" value="1"/>
</dbReference>
<dbReference type="FunFam" id="2.10.230.10:FF:000002">
    <property type="entry name" value="Molecular chaperone DnaJ"/>
    <property type="match status" value="1"/>
</dbReference>
<dbReference type="FunFam" id="1.10.287.110:FF:000053">
    <property type="entry name" value="Putative Mitochondrial DnaJ chaperone"/>
    <property type="match status" value="1"/>
</dbReference>
<dbReference type="Gene3D" id="1.10.287.110">
    <property type="entry name" value="DnaJ domain"/>
    <property type="match status" value="1"/>
</dbReference>
<dbReference type="Gene3D" id="2.10.230.10">
    <property type="entry name" value="Heat shock protein DnaJ, cysteine-rich domain"/>
    <property type="match status" value="1"/>
</dbReference>
<dbReference type="Gene3D" id="2.60.260.20">
    <property type="entry name" value="Urease metallochaperone UreE, N-terminal domain"/>
    <property type="match status" value="2"/>
</dbReference>
<dbReference type="HAMAP" id="MF_01152">
    <property type="entry name" value="DnaJ"/>
    <property type="match status" value="1"/>
</dbReference>
<dbReference type="InterPro" id="IPR012724">
    <property type="entry name" value="DnaJ"/>
</dbReference>
<dbReference type="InterPro" id="IPR002939">
    <property type="entry name" value="DnaJ_C"/>
</dbReference>
<dbReference type="InterPro" id="IPR001623">
    <property type="entry name" value="DnaJ_domain"/>
</dbReference>
<dbReference type="InterPro" id="IPR018253">
    <property type="entry name" value="DnaJ_domain_CS"/>
</dbReference>
<dbReference type="InterPro" id="IPR008971">
    <property type="entry name" value="HSP40/DnaJ_pept-bd"/>
</dbReference>
<dbReference type="InterPro" id="IPR001305">
    <property type="entry name" value="HSP_DnaJ_Cys-rich_dom"/>
</dbReference>
<dbReference type="InterPro" id="IPR036410">
    <property type="entry name" value="HSP_DnaJ_Cys-rich_dom_sf"/>
</dbReference>
<dbReference type="InterPro" id="IPR036869">
    <property type="entry name" value="J_dom_sf"/>
</dbReference>
<dbReference type="PANTHER" id="PTHR43096">
    <property type="entry name" value="DNAJ HOMOLOG 1, MITOCHONDRIAL-RELATED"/>
    <property type="match status" value="1"/>
</dbReference>
<dbReference type="PANTHER" id="PTHR43096:SF52">
    <property type="entry name" value="DNAJ HOMOLOG 1, MITOCHONDRIAL-RELATED"/>
    <property type="match status" value="1"/>
</dbReference>
<dbReference type="Pfam" id="PF00226">
    <property type="entry name" value="DnaJ"/>
    <property type="match status" value="1"/>
</dbReference>
<dbReference type="Pfam" id="PF01556">
    <property type="entry name" value="DnaJ_C"/>
    <property type="match status" value="1"/>
</dbReference>
<dbReference type="Pfam" id="PF00684">
    <property type="entry name" value="DnaJ_CXXCXGXG"/>
    <property type="match status" value="1"/>
</dbReference>
<dbReference type="PRINTS" id="PR00625">
    <property type="entry name" value="JDOMAIN"/>
</dbReference>
<dbReference type="SMART" id="SM00271">
    <property type="entry name" value="DnaJ"/>
    <property type="match status" value="1"/>
</dbReference>
<dbReference type="SUPFAM" id="SSF46565">
    <property type="entry name" value="Chaperone J-domain"/>
    <property type="match status" value="1"/>
</dbReference>
<dbReference type="SUPFAM" id="SSF57938">
    <property type="entry name" value="DnaJ/Hsp40 cysteine-rich domain"/>
    <property type="match status" value="1"/>
</dbReference>
<dbReference type="SUPFAM" id="SSF49493">
    <property type="entry name" value="HSP40/DnaJ peptide-binding domain"/>
    <property type="match status" value="2"/>
</dbReference>
<dbReference type="PROSITE" id="PS00636">
    <property type="entry name" value="DNAJ_1"/>
    <property type="match status" value="1"/>
</dbReference>
<dbReference type="PROSITE" id="PS50076">
    <property type="entry name" value="DNAJ_2"/>
    <property type="match status" value="1"/>
</dbReference>
<dbReference type="PROSITE" id="PS51188">
    <property type="entry name" value="ZF_CR"/>
    <property type="match status" value="1"/>
</dbReference>
<gene>
    <name type="primary">MDJ1</name>
    <name type="ordered locus">YFL016C</name>
</gene>
<feature type="transit peptide" description="Mitochondrion" evidence="1">
    <location>
        <begin position="1"/>
        <end position="55"/>
    </location>
</feature>
<feature type="chain" id="PRO_0000007268" description="DnaJ homolog 1, mitochondrial">
    <location>
        <begin position="56"/>
        <end position="511"/>
    </location>
</feature>
<feature type="domain" description="J">
    <location>
        <begin position="59"/>
        <end position="127"/>
    </location>
</feature>
<feature type="repeat" description="CXXCXGXG motif">
    <location>
        <begin position="230"/>
        <end position="237"/>
    </location>
</feature>
<feature type="repeat" description="CXXCXGXG motif">
    <location>
        <begin position="247"/>
        <end position="254"/>
    </location>
</feature>
<feature type="repeat" description="CXXCXGXG motif">
    <location>
        <begin position="269"/>
        <end position="276"/>
    </location>
</feature>
<feature type="repeat" description="CXXCXGXG motif">
    <location>
        <begin position="285"/>
        <end position="292"/>
    </location>
</feature>
<feature type="zinc finger region" description="CR-type">
    <location>
        <begin position="217"/>
        <end position="297"/>
    </location>
</feature>
<proteinExistence type="evidence at protein level"/>
<evidence type="ECO:0000255" key="1"/>
<evidence type="ECO:0000269" key="2">
    <source>
    </source>
</evidence>
<evidence type="ECO:0000269" key="3">
    <source>
    </source>
</evidence>
<evidence type="ECO:0000269" key="4">
    <source>
    </source>
</evidence>